<keyword id="KW-1185">Reference proteome</keyword>
<keyword id="KW-0687">Ribonucleoprotein</keyword>
<keyword id="KW-0689">Ribosomal protein</keyword>
<keyword id="KW-0694">RNA-binding</keyword>
<keyword id="KW-0699">rRNA-binding</keyword>
<reference key="1">
    <citation type="journal article" date="2011" name="Stand. Genomic Sci.">
        <title>Complete genome sequence of 'Thioalkalivibrio sulfidophilus' HL-EbGr7.</title>
        <authorList>
            <person name="Muyzer G."/>
            <person name="Sorokin D.Y."/>
            <person name="Mavromatis K."/>
            <person name="Lapidus A."/>
            <person name="Clum A."/>
            <person name="Ivanova N."/>
            <person name="Pati A."/>
            <person name="d'Haeseleer P."/>
            <person name="Woyke T."/>
            <person name="Kyrpides N.C."/>
        </authorList>
    </citation>
    <scope>NUCLEOTIDE SEQUENCE [LARGE SCALE GENOMIC DNA]</scope>
    <source>
        <strain>HL-EbGR7</strain>
    </source>
</reference>
<comment type="function">
    <text evidence="1">Binds to the 23S rRNA.</text>
</comment>
<comment type="similarity">
    <text evidence="1">Belongs to the bacterial ribosomal protein bL9 family.</text>
</comment>
<evidence type="ECO:0000255" key="1">
    <source>
        <dbReference type="HAMAP-Rule" id="MF_00503"/>
    </source>
</evidence>
<evidence type="ECO:0000305" key="2"/>
<gene>
    <name evidence="1" type="primary">rplI</name>
    <name type="ordered locus">Tgr7_0926</name>
</gene>
<accession>B8GNS5</accession>
<proteinExistence type="inferred from homology"/>
<sequence length="150" mass="16178">MEVILLTKVENLGNLGDKVRVRDGYARNYLVPQGKAKYATAENIAEFEARRAELEKAAAEALAVAEARRAKLEALEPVTIASKSGGEGKLFGSVGTHDIAEAVTAAGVEVEKREVRMPLGPIRQTGEYDIELHLHTDVNATVKVVVVAEQ</sequence>
<name>RL9_THISH</name>
<feature type="chain" id="PRO_1000196273" description="Large ribosomal subunit protein bL9">
    <location>
        <begin position="1"/>
        <end position="150"/>
    </location>
</feature>
<protein>
    <recommendedName>
        <fullName evidence="1">Large ribosomal subunit protein bL9</fullName>
    </recommendedName>
    <alternativeName>
        <fullName evidence="2">50S ribosomal protein L9</fullName>
    </alternativeName>
</protein>
<dbReference type="EMBL" id="CP001339">
    <property type="protein sequence ID" value="ACL72014.1"/>
    <property type="molecule type" value="Genomic_DNA"/>
</dbReference>
<dbReference type="RefSeq" id="WP_012637499.1">
    <property type="nucleotide sequence ID" value="NC_011901.1"/>
</dbReference>
<dbReference type="SMR" id="B8GNS5"/>
<dbReference type="STRING" id="396588.Tgr7_0926"/>
<dbReference type="KEGG" id="tgr:Tgr7_0926"/>
<dbReference type="eggNOG" id="COG0359">
    <property type="taxonomic scope" value="Bacteria"/>
</dbReference>
<dbReference type="HOGENOM" id="CLU_078938_4_1_6"/>
<dbReference type="OrthoDB" id="9788336at2"/>
<dbReference type="Proteomes" id="UP000002383">
    <property type="component" value="Chromosome"/>
</dbReference>
<dbReference type="GO" id="GO:1990904">
    <property type="term" value="C:ribonucleoprotein complex"/>
    <property type="evidence" value="ECO:0007669"/>
    <property type="project" value="UniProtKB-KW"/>
</dbReference>
<dbReference type="GO" id="GO:0005840">
    <property type="term" value="C:ribosome"/>
    <property type="evidence" value="ECO:0007669"/>
    <property type="project" value="UniProtKB-KW"/>
</dbReference>
<dbReference type="GO" id="GO:0019843">
    <property type="term" value="F:rRNA binding"/>
    <property type="evidence" value="ECO:0007669"/>
    <property type="project" value="UniProtKB-UniRule"/>
</dbReference>
<dbReference type="GO" id="GO:0003735">
    <property type="term" value="F:structural constituent of ribosome"/>
    <property type="evidence" value="ECO:0007669"/>
    <property type="project" value="InterPro"/>
</dbReference>
<dbReference type="GO" id="GO:0006412">
    <property type="term" value="P:translation"/>
    <property type="evidence" value="ECO:0007669"/>
    <property type="project" value="UniProtKB-UniRule"/>
</dbReference>
<dbReference type="Gene3D" id="3.10.430.100">
    <property type="entry name" value="Ribosomal protein L9, C-terminal domain"/>
    <property type="match status" value="1"/>
</dbReference>
<dbReference type="Gene3D" id="3.40.5.10">
    <property type="entry name" value="Ribosomal protein L9, N-terminal domain"/>
    <property type="match status" value="1"/>
</dbReference>
<dbReference type="HAMAP" id="MF_00503">
    <property type="entry name" value="Ribosomal_bL9"/>
    <property type="match status" value="1"/>
</dbReference>
<dbReference type="InterPro" id="IPR000244">
    <property type="entry name" value="Ribosomal_bL9"/>
</dbReference>
<dbReference type="InterPro" id="IPR009027">
    <property type="entry name" value="Ribosomal_bL9/RNase_H1_N"/>
</dbReference>
<dbReference type="InterPro" id="IPR020594">
    <property type="entry name" value="Ribosomal_bL9_bac/chp"/>
</dbReference>
<dbReference type="InterPro" id="IPR020069">
    <property type="entry name" value="Ribosomal_bL9_C"/>
</dbReference>
<dbReference type="InterPro" id="IPR036791">
    <property type="entry name" value="Ribosomal_bL9_C_sf"/>
</dbReference>
<dbReference type="InterPro" id="IPR020070">
    <property type="entry name" value="Ribosomal_bL9_N"/>
</dbReference>
<dbReference type="InterPro" id="IPR036935">
    <property type="entry name" value="Ribosomal_bL9_N_sf"/>
</dbReference>
<dbReference type="NCBIfam" id="TIGR00158">
    <property type="entry name" value="L9"/>
    <property type="match status" value="1"/>
</dbReference>
<dbReference type="PANTHER" id="PTHR21368">
    <property type="entry name" value="50S RIBOSOMAL PROTEIN L9"/>
    <property type="match status" value="1"/>
</dbReference>
<dbReference type="Pfam" id="PF03948">
    <property type="entry name" value="Ribosomal_L9_C"/>
    <property type="match status" value="1"/>
</dbReference>
<dbReference type="Pfam" id="PF01281">
    <property type="entry name" value="Ribosomal_L9_N"/>
    <property type="match status" value="1"/>
</dbReference>
<dbReference type="SUPFAM" id="SSF55658">
    <property type="entry name" value="L9 N-domain-like"/>
    <property type="match status" value="1"/>
</dbReference>
<dbReference type="SUPFAM" id="SSF55653">
    <property type="entry name" value="Ribosomal protein L9 C-domain"/>
    <property type="match status" value="1"/>
</dbReference>
<dbReference type="PROSITE" id="PS00651">
    <property type="entry name" value="RIBOSOMAL_L9"/>
    <property type="match status" value="1"/>
</dbReference>
<organism>
    <name type="scientific">Thioalkalivibrio sulfidiphilus (strain HL-EbGR7)</name>
    <dbReference type="NCBI Taxonomy" id="396588"/>
    <lineage>
        <taxon>Bacteria</taxon>
        <taxon>Pseudomonadati</taxon>
        <taxon>Pseudomonadota</taxon>
        <taxon>Gammaproteobacteria</taxon>
        <taxon>Chromatiales</taxon>
        <taxon>Ectothiorhodospiraceae</taxon>
        <taxon>Thioalkalivibrio</taxon>
    </lineage>
</organism>